<keyword id="KW-0732">Signal</keyword>
<reference key="1">
    <citation type="submission" date="2007-06" db="EMBL/GenBank/DDBJ databases">
        <title>Complete sequence of Methanococcus aeolicus Nankai-3.</title>
        <authorList>
            <consortium name="US DOE Joint Genome Institute"/>
            <person name="Copeland A."/>
            <person name="Lucas S."/>
            <person name="Lapidus A."/>
            <person name="Barry K."/>
            <person name="Glavina del Rio T."/>
            <person name="Dalin E."/>
            <person name="Tice H."/>
            <person name="Pitluck S."/>
            <person name="Chain P."/>
            <person name="Malfatti S."/>
            <person name="Shin M."/>
            <person name="Vergez L."/>
            <person name="Schmutz J."/>
            <person name="Larimer F."/>
            <person name="Land M."/>
            <person name="Hauser L."/>
            <person name="Kyrpides N."/>
            <person name="Lykidis A."/>
            <person name="Sieprawska-Lupa M."/>
            <person name="Whitman W.B."/>
            <person name="Richardson P."/>
        </authorList>
    </citation>
    <scope>NUCLEOTIDE SEQUENCE [LARGE SCALE GENOMIC DNA]</scope>
    <source>
        <strain>ATCC BAA-1280 / DSM 17508 / OCM 812 / Nankai-3</strain>
    </source>
</reference>
<proteinExistence type="inferred from homology"/>
<gene>
    <name type="ordered locus">Maeo_1470</name>
</gene>
<sequence length="349" mass="39592">MNKYIKQGAPILGILLAVMFGGREGDATTKTNTTEKTTNPITLKVSYAGSLSVPFEQYEKIYKKYHNNMGVQREAGGSVDCIEKIIYLNDTADVLASADYSLISTMMMPEYADWYLMNARNEIVIAYTDKSNYKDEINSDNWYNILNKPNVKFGFTSPNKDPCGYRSLMTIQLAELHYNIPTIFNDLALKNTNFGVEKENGTNTIIIPKEIKDINTDKIFLRNTESEVLEPLKTGVYDYLFIYKSVADQHNLKYIELPKEINLGYHEYADNYKKVKLTTGDGKTKTAKPIIYGITVPKTAKHQKEGIEFVKTILEHPEVFENAGQPVIEPAVGFGNIPDELKEFVEIRK</sequence>
<feature type="signal peptide" evidence="1">
    <location>
        <begin position="1"/>
        <end position="25"/>
    </location>
</feature>
<feature type="chain" id="PRO_0000334992" description="Uncharacterized solute-binding protein Maeo_1470">
    <location>
        <begin position="26"/>
        <end position="349"/>
    </location>
</feature>
<protein>
    <recommendedName>
        <fullName>Uncharacterized solute-binding protein Maeo_1470</fullName>
    </recommendedName>
</protein>
<organism>
    <name type="scientific">Methanococcus aeolicus (strain ATCC BAA-1280 / DSM 17508 / OCM 812 / Nankai-3)</name>
    <dbReference type="NCBI Taxonomy" id="419665"/>
    <lineage>
        <taxon>Archaea</taxon>
        <taxon>Methanobacteriati</taxon>
        <taxon>Methanobacteriota</taxon>
        <taxon>Methanomada group</taxon>
        <taxon>Methanococci</taxon>
        <taxon>Methanococcales</taxon>
        <taxon>Methanococcaceae</taxon>
        <taxon>Methanococcus</taxon>
    </lineage>
</organism>
<comment type="similarity">
    <text evidence="2">Belongs to the bacterial solute-binding protein 1 family. WtpA subfamily.</text>
</comment>
<name>Y1470_META3</name>
<dbReference type="EMBL" id="CP000743">
    <property type="protein sequence ID" value="ABR57046.1"/>
    <property type="molecule type" value="Genomic_DNA"/>
</dbReference>
<dbReference type="RefSeq" id="WP_011974178.1">
    <property type="nucleotide sequence ID" value="NC_009635.1"/>
</dbReference>
<dbReference type="SMR" id="A6UX24"/>
<dbReference type="STRING" id="419665.Maeo_1470"/>
<dbReference type="GeneID" id="5327259"/>
<dbReference type="KEGG" id="mae:Maeo_1470"/>
<dbReference type="eggNOG" id="arCOG00219">
    <property type="taxonomic scope" value="Archaea"/>
</dbReference>
<dbReference type="HOGENOM" id="CLU_055936_0_0_2"/>
<dbReference type="OrthoDB" id="7820at2157"/>
<dbReference type="Proteomes" id="UP000001106">
    <property type="component" value="Chromosome"/>
</dbReference>
<dbReference type="GO" id="GO:0030973">
    <property type="term" value="F:molybdate ion binding"/>
    <property type="evidence" value="ECO:0007669"/>
    <property type="project" value="TreeGrafter"/>
</dbReference>
<dbReference type="GO" id="GO:1901359">
    <property type="term" value="F:tungstate binding"/>
    <property type="evidence" value="ECO:0007669"/>
    <property type="project" value="InterPro"/>
</dbReference>
<dbReference type="GO" id="GO:0015689">
    <property type="term" value="P:molybdate ion transport"/>
    <property type="evidence" value="ECO:0007669"/>
    <property type="project" value="TreeGrafter"/>
</dbReference>
<dbReference type="CDD" id="cd13540">
    <property type="entry name" value="PBP2_ModA_WtpA"/>
    <property type="match status" value="1"/>
</dbReference>
<dbReference type="Gene3D" id="3.40.190.10">
    <property type="entry name" value="Periplasmic binding protein-like II"/>
    <property type="match status" value="2"/>
</dbReference>
<dbReference type="InterPro" id="IPR022498">
    <property type="entry name" value="ABC_trnspt_W-bd_WtpA"/>
</dbReference>
<dbReference type="InterPro" id="IPR050682">
    <property type="entry name" value="ModA/WtpA"/>
</dbReference>
<dbReference type="NCBIfam" id="NF003196">
    <property type="entry name" value="PRK04168.1"/>
    <property type="match status" value="1"/>
</dbReference>
<dbReference type="NCBIfam" id="TIGR03730">
    <property type="entry name" value="tungstate_WtpA"/>
    <property type="match status" value="1"/>
</dbReference>
<dbReference type="PANTHER" id="PTHR30632">
    <property type="entry name" value="MOLYBDATE-BINDING PERIPLASMIC PROTEIN"/>
    <property type="match status" value="1"/>
</dbReference>
<dbReference type="PANTHER" id="PTHR30632:SF16">
    <property type="entry name" value="MOLYBDATE_TUNGSTATE-BINDING PROTEIN WTPA"/>
    <property type="match status" value="1"/>
</dbReference>
<dbReference type="Pfam" id="PF13531">
    <property type="entry name" value="SBP_bac_11"/>
    <property type="match status" value="1"/>
</dbReference>
<dbReference type="SUPFAM" id="SSF53850">
    <property type="entry name" value="Periplasmic binding protein-like II"/>
    <property type="match status" value="1"/>
</dbReference>
<evidence type="ECO:0000255" key="1"/>
<evidence type="ECO:0000305" key="2"/>
<accession>A6UX24</accession>